<sequence>MINITLPDDSIKSFKEYPKGMDVARGISEGFARNCVAMEIDGQLLDLDVEIRNDCAVRLITTRDAEAVEILRHSAAHVMAEAVQNLHADAKLTIGPVVEDGFYYDIDMAPISDADFPKIEAEMAKIVKAKKPFQRSEITKQEALELFKDNPYKVELINGLDDQTISIYQQGDFVDLCRGPHIPHTGMIKGLKLMKTSGAYWRADQEKAQLQRLYGTAFFDKKELKAYLHLIEEAKKRDHRKIGTRMGLFSFHQEAAGMPFFHAKGMEMWNELLAYWRDEHRAAGYVETKTPVMMSRHLWEKSGHWENYRENMYTSVVDGEEYAIKPMNCPGGMLLYKTESHSYRDLPLRAGEIGLVHRHELSGALSGLFRVRAFHQDDAHIFMTPEQIESEILGVLELVERIYSRFGLGFHLELSTRPKKSIGSDEQWAEATNGLKNALDKYGQPYAINEGDGAFYGPKIDIHIKDALGRTWQCGTVQLDMALPERFDLTYKGADNEKHRPIMIHRVIYGSIERFFGILVEHFAGKFPLWLAPVQAVVLPINDDLADHAQTVKKELESNGIRCDVDLRTESLKKKIREAQVNYVPLIITIGEKEKESGTLSVRTLDGKVRMGLSMADFIPPVLAHIRARQLDEDIL</sequence>
<accession>C0QAP1</accession>
<evidence type="ECO:0000255" key="1">
    <source>
        <dbReference type="HAMAP-Rule" id="MF_00184"/>
    </source>
</evidence>
<evidence type="ECO:0000255" key="2">
    <source>
        <dbReference type="PROSITE-ProRule" id="PRU01228"/>
    </source>
</evidence>
<reference key="1">
    <citation type="journal article" date="2009" name="Environ. Microbiol.">
        <title>Genome sequence of Desulfobacterium autotrophicum HRM2, a marine sulfate reducer oxidizing organic carbon completely to carbon dioxide.</title>
        <authorList>
            <person name="Strittmatter A.W."/>
            <person name="Liesegang H."/>
            <person name="Rabus R."/>
            <person name="Decker I."/>
            <person name="Amann J."/>
            <person name="Andres S."/>
            <person name="Henne A."/>
            <person name="Fricke W.F."/>
            <person name="Martinez-Arias R."/>
            <person name="Bartels D."/>
            <person name="Goesmann A."/>
            <person name="Krause L."/>
            <person name="Puehler A."/>
            <person name="Klenk H.P."/>
            <person name="Richter M."/>
            <person name="Schuler M."/>
            <person name="Gloeckner F.O."/>
            <person name="Meyerdierks A."/>
            <person name="Gottschalk G."/>
            <person name="Amann R."/>
        </authorList>
    </citation>
    <scope>NUCLEOTIDE SEQUENCE [LARGE SCALE GENOMIC DNA]</scope>
    <source>
        <strain>ATCC 43914 / DSM 3382 / VKM B-1955 / HRM2</strain>
    </source>
</reference>
<dbReference type="EC" id="6.1.1.3" evidence="1"/>
<dbReference type="EMBL" id="CP001087">
    <property type="protein sequence ID" value="ACN16824.1"/>
    <property type="molecule type" value="Genomic_DNA"/>
</dbReference>
<dbReference type="RefSeq" id="WP_015905570.1">
    <property type="nucleotide sequence ID" value="NC_012108.1"/>
</dbReference>
<dbReference type="SMR" id="C0QAP1"/>
<dbReference type="STRING" id="177437.HRM2_37660"/>
<dbReference type="KEGG" id="dat:HRM2_37660"/>
<dbReference type="eggNOG" id="COG0441">
    <property type="taxonomic scope" value="Bacteria"/>
</dbReference>
<dbReference type="HOGENOM" id="CLU_008554_0_1_7"/>
<dbReference type="OrthoDB" id="9802304at2"/>
<dbReference type="Proteomes" id="UP000000442">
    <property type="component" value="Chromosome"/>
</dbReference>
<dbReference type="GO" id="GO:0005737">
    <property type="term" value="C:cytoplasm"/>
    <property type="evidence" value="ECO:0007669"/>
    <property type="project" value="UniProtKB-SubCell"/>
</dbReference>
<dbReference type="GO" id="GO:0005524">
    <property type="term" value="F:ATP binding"/>
    <property type="evidence" value="ECO:0007669"/>
    <property type="project" value="UniProtKB-UniRule"/>
</dbReference>
<dbReference type="GO" id="GO:0046872">
    <property type="term" value="F:metal ion binding"/>
    <property type="evidence" value="ECO:0007669"/>
    <property type="project" value="UniProtKB-KW"/>
</dbReference>
<dbReference type="GO" id="GO:0004829">
    <property type="term" value="F:threonine-tRNA ligase activity"/>
    <property type="evidence" value="ECO:0007669"/>
    <property type="project" value="UniProtKB-UniRule"/>
</dbReference>
<dbReference type="GO" id="GO:0000049">
    <property type="term" value="F:tRNA binding"/>
    <property type="evidence" value="ECO:0007669"/>
    <property type="project" value="UniProtKB-KW"/>
</dbReference>
<dbReference type="GO" id="GO:0006435">
    <property type="term" value="P:threonyl-tRNA aminoacylation"/>
    <property type="evidence" value="ECO:0007669"/>
    <property type="project" value="UniProtKB-UniRule"/>
</dbReference>
<dbReference type="CDD" id="cd01667">
    <property type="entry name" value="TGS_ThrRS"/>
    <property type="match status" value="1"/>
</dbReference>
<dbReference type="CDD" id="cd00860">
    <property type="entry name" value="ThrRS_anticodon"/>
    <property type="match status" value="1"/>
</dbReference>
<dbReference type="CDD" id="cd00771">
    <property type="entry name" value="ThrRS_core"/>
    <property type="match status" value="1"/>
</dbReference>
<dbReference type="FunFam" id="3.30.54.20:FF:000002">
    <property type="entry name" value="Threonine--tRNA ligase"/>
    <property type="match status" value="1"/>
</dbReference>
<dbReference type="FunFam" id="3.30.930.10:FF:000019">
    <property type="entry name" value="Threonine--tRNA ligase"/>
    <property type="match status" value="1"/>
</dbReference>
<dbReference type="FunFam" id="3.40.50.800:FF:000001">
    <property type="entry name" value="Threonine--tRNA ligase"/>
    <property type="match status" value="1"/>
</dbReference>
<dbReference type="FunFam" id="3.30.980.10:FF:000005">
    <property type="entry name" value="Threonyl-tRNA synthetase, mitochondrial"/>
    <property type="match status" value="1"/>
</dbReference>
<dbReference type="Gene3D" id="3.10.20.30">
    <property type="match status" value="1"/>
</dbReference>
<dbReference type="Gene3D" id="3.30.54.20">
    <property type="match status" value="1"/>
</dbReference>
<dbReference type="Gene3D" id="3.40.50.800">
    <property type="entry name" value="Anticodon-binding domain"/>
    <property type="match status" value="1"/>
</dbReference>
<dbReference type="Gene3D" id="3.30.930.10">
    <property type="entry name" value="Bira Bifunctional Protein, Domain 2"/>
    <property type="match status" value="1"/>
</dbReference>
<dbReference type="Gene3D" id="3.30.980.10">
    <property type="entry name" value="Threonyl-trna Synthetase, Chain A, domain 2"/>
    <property type="match status" value="1"/>
</dbReference>
<dbReference type="HAMAP" id="MF_00184">
    <property type="entry name" value="Thr_tRNA_synth"/>
    <property type="match status" value="1"/>
</dbReference>
<dbReference type="InterPro" id="IPR002314">
    <property type="entry name" value="aa-tRNA-synt_IIb"/>
</dbReference>
<dbReference type="InterPro" id="IPR006195">
    <property type="entry name" value="aa-tRNA-synth_II"/>
</dbReference>
<dbReference type="InterPro" id="IPR045864">
    <property type="entry name" value="aa-tRNA-synth_II/BPL/LPL"/>
</dbReference>
<dbReference type="InterPro" id="IPR004154">
    <property type="entry name" value="Anticodon-bd"/>
</dbReference>
<dbReference type="InterPro" id="IPR036621">
    <property type="entry name" value="Anticodon-bd_dom_sf"/>
</dbReference>
<dbReference type="InterPro" id="IPR012675">
    <property type="entry name" value="Beta-grasp_dom_sf"/>
</dbReference>
<dbReference type="InterPro" id="IPR004095">
    <property type="entry name" value="TGS"/>
</dbReference>
<dbReference type="InterPro" id="IPR012676">
    <property type="entry name" value="TGS-like"/>
</dbReference>
<dbReference type="InterPro" id="IPR002320">
    <property type="entry name" value="Thr-tRNA-ligase_IIa"/>
</dbReference>
<dbReference type="InterPro" id="IPR018163">
    <property type="entry name" value="Thr/Ala-tRNA-synth_IIc_edit"/>
</dbReference>
<dbReference type="InterPro" id="IPR047246">
    <property type="entry name" value="ThrRS_anticodon"/>
</dbReference>
<dbReference type="InterPro" id="IPR033728">
    <property type="entry name" value="ThrRS_core"/>
</dbReference>
<dbReference type="InterPro" id="IPR012947">
    <property type="entry name" value="tRNA_SAD"/>
</dbReference>
<dbReference type="NCBIfam" id="TIGR00418">
    <property type="entry name" value="thrS"/>
    <property type="match status" value="1"/>
</dbReference>
<dbReference type="PANTHER" id="PTHR11451:SF44">
    <property type="entry name" value="THREONINE--TRNA LIGASE, CHLOROPLASTIC_MITOCHONDRIAL 2"/>
    <property type="match status" value="1"/>
</dbReference>
<dbReference type="PANTHER" id="PTHR11451">
    <property type="entry name" value="THREONINE-TRNA LIGASE"/>
    <property type="match status" value="1"/>
</dbReference>
<dbReference type="Pfam" id="PF03129">
    <property type="entry name" value="HGTP_anticodon"/>
    <property type="match status" value="1"/>
</dbReference>
<dbReference type="Pfam" id="PF02824">
    <property type="entry name" value="TGS"/>
    <property type="match status" value="1"/>
</dbReference>
<dbReference type="Pfam" id="PF00587">
    <property type="entry name" value="tRNA-synt_2b"/>
    <property type="match status" value="1"/>
</dbReference>
<dbReference type="Pfam" id="PF07973">
    <property type="entry name" value="tRNA_SAD"/>
    <property type="match status" value="1"/>
</dbReference>
<dbReference type="PRINTS" id="PR01047">
    <property type="entry name" value="TRNASYNTHTHR"/>
</dbReference>
<dbReference type="SMART" id="SM00863">
    <property type="entry name" value="tRNA_SAD"/>
    <property type="match status" value="1"/>
</dbReference>
<dbReference type="SUPFAM" id="SSF52954">
    <property type="entry name" value="Class II aaRS ABD-related"/>
    <property type="match status" value="1"/>
</dbReference>
<dbReference type="SUPFAM" id="SSF55681">
    <property type="entry name" value="Class II aaRS and biotin synthetases"/>
    <property type="match status" value="1"/>
</dbReference>
<dbReference type="SUPFAM" id="SSF81271">
    <property type="entry name" value="TGS-like"/>
    <property type="match status" value="1"/>
</dbReference>
<dbReference type="SUPFAM" id="SSF55186">
    <property type="entry name" value="ThrRS/AlaRS common domain"/>
    <property type="match status" value="1"/>
</dbReference>
<dbReference type="PROSITE" id="PS50862">
    <property type="entry name" value="AA_TRNA_LIGASE_II"/>
    <property type="match status" value="1"/>
</dbReference>
<dbReference type="PROSITE" id="PS51880">
    <property type="entry name" value="TGS"/>
    <property type="match status" value="1"/>
</dbReference>
<protein>
    <recommendedName>
        <fullName evidence="1">Threonine--tRNA ligase</fullName>
        <ecNumber evidence="1">6.1.1.3</ecNumber>
    </recommendedName>
    <alternativeName>
        <fullName evidence="1">Threonyl-tRNA synthetase</fullName>
        <shortName evidence="1">ThrRS</shortName>
    </alternativeName>
</protein>
<keyword id="KW-0030">Aminoacyl-tRNA synthetase</keyword>
<keyword id="KW-0067">ATP-binding</keyword>
<keyword id="KW-0963">Cytoplasm</keyword>
<keyword id="KW-0436">Ligase</keyword>
<keyword id="KW-0479">Metal-binding</keyword>
<keyword id="KW-0547">Nucleotide-binding</keyword>
<keyword id="KW-0648">Protein biosynthesis</keyword>
<keyword id="KW-1185">Reference proteome</keyword>
<keyword id="KW-0694">RNA-binding</keyword>
<keyword id="KW-0820">tRNA-binding</keyword>
<keyword id="KW-0862">Zinc</keyword>
<organism>
    <name type="scientific">Desulforapulum autotrophicum (strain ATCC 43914 / DSM 3382 / VKM B-1955 / HRM2)</name>
    <name type="common">Desulfobacterium autotrophicum</name>
    <dbReference type="NCBI Taxonomy" id="177437"/>
    <lineage>
        <taxon>Bacteria</taxon>
        <taxon>Pseudomonadati</taxon>
        <taxon>Thermodesulfobacteriota</taxon>
        <taxon>Desulfobacteria</taxon>
        <taxon>Desulfobacterales</taxon>
        <taxon>Desulfobacteraceae</taxon>
        <taxon>Desulforapulum</taxon>
    </lineage>
</organism>
<proteinExistence type="inferred from homology"/>
<name>SYT_DESAH</name>
<comment type="function">
    <text evidence="1">Catalyzes the attachment of threonine to tRNA(Thr) in a two-step reaction: L-threonine is first activated by ATP to form Thr-AMP and then transferred to the acceptor end of tRNA(Thr). Also edits incorrectly charged L-seryl-tRNA(Thr).</text>
</comment>
<comment type="catalytic activity">
    <reaction evidence="1">
        <text>tRNA(Thr) + L-threonine + ATP = L-threonyl-tRNA(Thr) + AMP + diphosphate + H(+)</text>
        <dbReference type="Rhea" id="RHEA:24624"/>
        <dbReference type="Rhea" id="RHEA-COMP:9670"/>
        <dbReference type="Rhea" id="RHEA-COMP:9704"/>
        <dbReference type="ChEBI" id="CHEBI:15378"/>
        <dbReference type="ChEBI" id="CHEBI:30616"/>
        <dbReference type="ChEBI" id="CHEBI:33019"/>
        <dbReference type="ChEBI" id="CHEBI:57926"/>
        <dbReference type="ChEBI" id="CHEBI:78442"/>
        <dbReference type="ChEBI" id="CHEBI:78534"/>
        <dbReference type="ChEBI" id="CHEBI:456215"/>
        <dbReference type="EC" id="6.1.1.3"/>
    </reaction>
</comment>
<comment type="cofactor">
    <cofactor evidence="1">
        <name>Zn(2+)</name>
        <dbReference type="ChEBI" id="CHEBI:29105"/>
    </cofactor>
    <text evidence="1">Binds 1 zinc ion per subunit.</text>
</comment>
<comment type="subunit">
    <text evidence="1">Homodimer.</text>
</comment>
<comment type="subcellular location">
    <subcellularLocation>
        <location evidence="1">Cytoplasm</location>
    </subcellularLocation>
</comment>
<comment type="similarity">
    <text evidence="1">Belongs to the class-II aminoacyl-tRNA synthetase family.</text>
</comment>
<feature type="chain" id="PRO_1000203901" description="Threonine--tRNA ligase">
    <location>
        <begin position="1"/>
        <end position="636"/>
    </location>
</feature>
<feature type="domain" description="TGS" evidence="2">
    <location>
        <begin position="1"/>
        <end position="61"/>
    </location>
</feature>
<feature type="region of interest" description="Catalytic" evidence="1">
    <location>
        <begin position="238"/>
        <end position="528"/>
    </location>
</feature>
<feature type="binding site" evidence="1">
    <location>
        <position position="329"/>
    </location>
    <ligand>
        <name>Zn(2+)</name>
        <dbReference type="ChEBI" id="CHEBI:29105"/>
    </ligand>
</feature>
<feature type="binding site" evidence="1">
    <location>
        <position position="380"/>
    </location>
    <ligand>
        <name>Zn(2+)</name>
        <dbReference type="ChEBI" id="CHEBI:29105"/>
    </ligand>
</feature>
<feature type="binding site" evidence="1">
    <location>
        <position position="505"/>
    </location>
    <ligand>
        <name>Zn(2+)</name>
        <dbReference type="ChEBI" id="CHEBI:29105"/>
    </ligand>
</feature>
<gene>
    <name evidence="1" type="primary">thrS</name>
    <name type="ordered locus">HRM2_37660</name>
</gene>